<accession>C1DHS2</accession>
<comment type="function">
    <text evidence="1">Methyltransferase required for the conversion of demethylmenaquinol (DMKH2) to menaquinol (MKH2) and the conversion of 2-polyprenyl-6-methoxy-1,4-benzoquinol (DDMQH2) to 2-polyprenyl-3-methyl-6-methoxy-1,4-benzoquinol (DMQH2).</text>
</comment>
<comment type="catalytic activity">
    <reaction evidence="1">
        <text>a 2-demethylmenaquinol + S-adenosyl-L-methionine = a menaquinol + S-adenosyl-L-homocysteine + H(+)</text>
        <dbReference type="Rhea" id="RHEA:42640"/>
        <dbReference type="Rhea" id="RHEA-COMP:9539"/>
        <dbReference type="Rhea" id="RHEA-COMP:9563"/>
        <dbReference type="ChEBI" id="CHEBI:15378"/>
        <dbReference type="ChEBI" id="CHEBI:18151"/>
        <dbReference type="ChEBI" id="CHEBI:55437"/>
        <dbReference type="ChEBI" id="CHEBI:57856"/>
        <dbReference type="ChEBI" id="CHEBI:59789"/>
        <dbReference type="EC" id="2.1.1.163"/>
    </reaction>
</comment>
<comment type="catalytic activity">
    <reaction evidence="1">
        <text>a 2-methoxy-6-(all-trans-polyprenyl)benzene-1,4-diol + S-adenosyl-L-methionine = a 5-methoxy-2-methyl-3-(all-trans-polyprenyl)benzene-1,4-diol + S-adenosyl-L-homocysteine + H(+)</text>
        <dbReference type="Rhea" id="RHEA:28286"/>
        <dbReference type="Rhea" id="RHEA-COMP:10858"/>
        <dbReference type="Rhea" id="RHEA-COMP:10859"/>
        <dbReference type="ChEBI" id="CHEBI:15378"/>
        <dbReference type="ChEBI" id="CHEBI:57856"/>
        <dbReference type="ChEBI" id="CHEBI:59789"/>
        <dbReference type="ChEBI" id="CHEBI:84166"/>
        <dbReference type="ChEBI" id="CHEBI:84167"/>
        <dbReference type="EC" id="2.1.1.201"/>
    </reaction>
</comment>
<comment type="pathway">
    <text evidence="1">Quinol/quinone metabolism; menaquinone biosynthesis; menaquinol from 1,4-dihydroxy-2-naphthoate: step 2/2.</text>
</comment>
<comment type="pathway">
    <text evidence="1">Cofactor biosynthesis; ubiquinone biosynthesis.</text>
</comment>
<comment type="similarity">
    <text evidence="1">Belongs to the class I-like SAM-binding methyltransferase superfamily. MenG/UbiE family.</text>
</comment>
<evidence type="ECO:0000255" key="1">
    <source>
        <dbReference type="HAMAP-Rule" id="MF_01813"/>
    </source>
</evidence>
<gene>
    <name evidence="1" type="primary">ubiE</name>
    <name type="ordered locus">Avin_45410</name>
</gene>
<protein>
    <recommendedName>
        <fullName evidence="1">Ubiquinone/menaquinone biosynthesis C-methyltransferase UbiE</fullName>
        <ecNumber evidence="1">2.1.1.163</ecNumber>
        <ecNumber evidence="1">2.1.1.201</ecNumber>
    </recommendedName>
    <alternativeName>
        <fullName evidence="1">2-methoxy-6-polyprenyl-1,4-benzoquinol methylase</fullName>
    </alternativeName>
    <alternativeName>
        <fullName evidence="1">Demethylmenaquinone methyltransferase</fullName>
    </alternativeName>
</protein>
<dbReference type="EC" id="2.1.1.163" evidence="1"/>
<dbReference type="EC" id="2.1.1.201" evidence="1"/>
<dbReference type="EMBL" id="CP001157">
    <property type="protein sequence ID" value="ACO80655.1"/>
    <property type="molecule type" value="Genomic_DNA"/>
</dbReference>
<dbReference type="RefSeq" id="WP_012703022.1">
    <property type="nucleotide sequence ID" value="NC_012560.1"/>
</dbReference>
<dbReference type="SMR" id="C1DHS2"/>
<dbReference type="STRING" id="322710.Avin_45410"/>
<dbReference type="EnsemblBacteria" id="ACO80655">
    <property type="protein sequence ID" value="ACO80655"/>
    <property type="gene ID" value="Avin_45410"/>
</dbReference>
<dbReference type="GeneID" id="88187425"/>
<dbReference type="KEGG" id="avn:Avin_45410"/>
<dbReference type="eggNOG" id="COG2226">
    <property type="taxonomic scope" value="Bacteria"/>
</dbReference>
<dbReference type="HOGENOM" id="CLU_037990_0_0_6"/>
<dbReference type="OrthoDB" id="9808140at2"/>
<dbReference type="UniPathway" id="UPA00079">
    <property type="reaction ID" value="UER00169"/>
</dbReference>
<dbReference type="UniPathway" id="UPA00232"/>
<dbReference type="Proteomes" id="UP000002424">
    <property type="component" value="Chromosome"/>
</dbReference>
<dbReference type="GO" id="GO:0008425">
    <property type="term" value="F:2-methoxy-6-polyprenyl-1,4-benzoquinol methyltransferase activity"/>
    <property type="evidence" value="ECO:0007669"/>
    <property type="project" value="UniProtKB-UniRule"/>
</dbReference>
<dbReference type="GO" id="GO:0043770">
    <property type="term" value="F:demethylmenaquinone methyltransferase activity"/>
    <property type="evidence" value="ECO:0007669"/>
    <property type="project" value="UniProtKB-UniRule"/>
</dbReference>
<dbReference type="GO" id="GO:0009060">
    <property type="term" value="P:aerobic respiration"/>
    <property type="evidence" value="ECO:0007669"/>
    <property type="project" value="UniProtKB-UniRule"/>
</dbReference>
<dbReference type="GO" id="GO:0009234">
    <property type="term" value="P:menaquinone biosynthetic process"/>
    <property type="evidence" value="ECO:0007669"/>
    <property type="project" value="UniProtKB-UniRule"/>
</dbReference>
<dbReference type="GO" id="GO:0032259">
    <property type="term" value="P:methylation"/>
    <property type="evidence" value="ECO:0007669"/>
    <property type="project" value="UniProtKB-KW"/>
</dbReference>
<dbReference type="CDD" id="cd02440">
    <property type="entry name" value="AdoMet_MTases"/>
    <property type="match status" value="1"/>
</dbReference>
<dbReference type="FunFam" id="3.40.50.150:FF:000014">
    <property type="entry name" value="Ubiquinone/menaquinone biosynthesis C-methyltransferase UbiE"/>
    <property type="match status" value="1"/>
</dbReference>
<dbReference type="Gene3D" id="3.40.50.150">
    <property type="entry name" value="Vaccinia Virus protein VP39"/>
    <property type="match status" value="1"/>
</dbReference>
<dbReference type="HAMAP" id="MF_01813">
    <property type="entry name" value="MenG_UbiE_methyltr"/>
    <property type="match status" value="1"/>
</dbReference>
<dbReference type="InterPro" id="IPR029063">
    <property type="entry name" value="SAM-dependent_MTases_sf"/>
</dbReference>
<dbReference type="InterPro" id="IPR004033">
    <property type="entry name" value="UbiE/COQ5_MeTrFase"/>
</dbReference>
<dbReference type="InterPro" id="IPR023576">
    <property type="entry name" value="UbiE/COQ5_MeTrFase_CS"/>
</dbReference>
<dbReference type="NCBIfam" id="TIGR01934">
    <property type="entry name" value="MenG_MenH_UbiE"/>
    <property type="match status" value="1"/>
</dbReference>
<dbReference type="NCBIfam" id="NF001240">
    <property type="entry name" value="PRK00216.1-1"/>
    <property type="match status" value="1"/>
</dbReference>
<dbReference type="NCBIfam" id="NF001244">
    <property type="entry name" value="PRK00216.1-5"/>
    <property type="match status" value="1"/>
</dbReference>
<dbReference type="PANTHER" id="PTHR43591:SF24">
    <property type="entry name" value="2-METHOXY-6-POLYPRENYL-1,4-BENZOQUINOL METHYLASE, MITOCHONDRIAL"/>
    <property type="match status" value="1"/>
</dbReference>
<dbReference type="PANTHER" id="PTHR43591">
    <property type="entry name" value="METHYLTRANSFERASE"/>
    <property type="match status" value="1"/>
</dbReference>
<dbReference type="Pfam" id="PF01209">
    <property type="entry name" value="Ubie_methyltran"/>
    <property type="match status" value="1"/>
</dbReference>
<dbReference type="SUPFAM" id="SSF53335">
    <property type="entry name" value="S-adenosyl-L-methionine-dependent methyltransferases"/>
    <property type="match status" value="1"/>
</dbReference>
<dbReference type="PROSITE" id="PS51608">
    <property type="entry name" value="SAM_MT_UBIE"/>
    <property type="match status" value="1"/>
</dbReference>
<dbReference type="PROSITE" id="PS01183">
    <property type="entry name" value="UBIE_1"/>
    <property type="match status" value="1"/>
</dbReference>
<dbReference type="PROSITE" id="PS01184">
    <property type="entry name" value="UBIE_2"/>
    <property type="match status" value="1"/>
</dbReference>
<feature type="chain" id="PRO_1000215980" description="Ubiquinone/menaquinone biosynthesis C-methyltransferase UbiE">
    <location>
        <begin position="1"/>
        <end position="253"/>
    </location>
</feature>
<feature type="binding site" evidence="1">
    <location>
        <position position="76"/>
    </location>
    <ligand>
        <name>S-adenosyl-L-methionine</name>
        <dbReference type="ChEBI" id="CHEBI:59789"/>
    </ligand>
</feature>
<feature type="binding site" evidence="1">
    <location>
        <position position="97"/>
    </location>
    <ligand>
        <name>S-adenosyl-L-methionine</name>
        <dbReference type="ChEBI" id="CHEBI:59789"/>
    </ligand>
</feature>
<feature type="binding site" evidence="1">
    <location>
        <begin position="125"/>
        <end position="126"/>
    </location>
    <ligand>
        <name>S-adenosyl-L-methionine</name>
        <dbReference type="ChEBI" id="CHEBI:59789"/>
    </ligand>
</feature>
<sequence>MNDPRKTESTTHFGYQSVPESQKARKVAEVFHSVAAKYDLMNDVLSGGLHRLWKRFTIELSGVRRGNRVLDIAGGTGDLTLQFSRLVGESGEVLLADINDSMLKVGRDRLLDRGVAGNVRFVQADAEKLPFPDNHFDVITIAFGLRNVTRKEDALRSMLRVLKPGGRLLVLEFSKPSNALLGKVYDAYSFAFMPLAGKLITNDADSYRYLAESIRMHPDQETLKSMMAGAGFERVTYHNMTGGIVALHRGLKP</sequence>
<name>UBIE_AZOVD</name>
<proteinExistence type="inferred from homology"/>
<organism>
    <name type="scientific">Azotobacter vinelandii (strain DJ / ATCC BAA-1303)</name>
    <dbReference type="NCBI Taxonomy" id="322710"/>
    <lineage>
        <taxon>Bacteria</taxon>
        <taxon>Pseudomonadati</taxon>
        <taxon>Pseudomonadota</taxon>
        <taxon>Gammaproteobacteria</taxon>
        <taxon>Pseudomonadales</taxon>
        <taxon>Pseudomonadaceae</taxon>
        <taxon>Azotobacter</taxon>
    </lineage>
</organism>
<keyword id="KW-0474">Menaquinone biosynthesis</keyword>
<keyword id="KW-0489">Methyltransferase</keyword>
<keyword id="KW-0949">S-adenosyl-L-methionine</keyword>
<keyword id="KW-0808">Transferase</keyword>
<keyword id="KW-0831">Ubiquinone biosynthesis</keyword>
<reference key="1">
    <citation type="journal article" date="2009" name="J. Bacteriol.">
        <title>Genome sequence of Azotobacter vinelandii, an obligate aerobe specialized to support diverse anaerobic metabolic processes.</title>
        <authorList>
            <person name="Setubal J.C."/>
            <person name="Dos Santos P."/>
            <person name="Goldman B.S."/>
            <person name="Ertesvaag H."/>
            <person name="Espin G."/>
            <person name="Rubio L.M."/>
            <person name="Valla S."/>
            <person name="Almeida N.F."/>
            <person name="Balasubramanian D."/>
            <person name="Cromes L."/>
            <person name="Curatti L."/>
            <person name="Du Z."/>
            <person name="Godsy E."/>
            <person name="Goodner B."/>
            <person name="Hellner-Burris K."/>
            <person name="Hernandez J.A."/>
            <person name="Houmiel K."/>
            <person name="Imperial J."/>
            <person name="Kennedy C."/>
            <person name="Larson T.J."/>
            <person name="Latreille P."/>
            <person name="Ligon L.S."/>
            <person name="Lu J."/>
            <person name="Maerk M."/>
            <person name="Miller N.M."/>
            <person name="Norton S."/>
            <person name="O'Carroll I.P."/>
            <person name="Paulsen I."/>
            <person name="Raulfs E.C."/>
            <person name="Roemer R."/>
            <person name="Rosser J."/>
            <person name="Segura D."/>
            <person name="Slater S."/>
            <person name="Stricklin S.L."/>
            <person name="Studholme D.J."/>
            <person name="Sun J."/>
            <person name="Viana C.J."/>
            <person name="Wallin E."/>
            <person name="Wang B."/>
            <person name="Wheeler C."/>
            <person name="Zhu H."/>
            <person name="Dean D.R."/>
            <person name="Dixon R."/>
            <person name="Wood D."/>
        </authorList>
    </citation>
    <scope>NUCLEOTIDE SEQUENCE [LARGE SCALE GENOMIC DNA]</scope>
    <source>
        <strain>DJ / ATCC BAA-1303</strain>
    </source>
</reference>